<dbReference type="EC" id="6.3.2.9" evidence="1"/>
<dbReference type="EMBL" id="CP000661">
    <property type="protein sequence ID" value="ABP69596.1"/>
    <property type="molecule type" value="Genomic_DNA"/>
</dbReference>
<dbReference type="SMR" id="A4WQD2"/>
<dbReference type="STRING" id="349102.Rsph17025_0690"/>
<dbReference type="KEGG" id="rsq:Rsph17025_0690"/>
<dbReference type="eggNOG" id="COG0771">
    <property type="taxonomic scope" value="Bacteria"/>
</dbReference>
<dbReference type="HOGENOM" id="CLU_032540_3_0_5"/>
<dbReference type="BioCyc" id="RSPH349102:G1G8M-712-MONOMER"/>
<dbReference type="UniPathway" id="UPA00219"/>
<dbReference type="GO" id="GO:0005737">
    <property type="term" value="C:cytoplasm"/>
    <property type="evidence" value="ECO:0007669"/>
    <property type="project" value="UniProtKB-SubCell"/>
</dbReference>
<dbReference type="GO" id="GO:0005524">
    <property type="term" value="F:ATP binding"/>
    <property type="evidence" value="ECO:0007669"/>
    <property type="project" value="UniProtKB-UniRule"/>
</dbReference>
<dbReference type="GO" id="GO:0008764">
    <property type="term" value="F:UDP-N-acetylmuramoylalanine-D-glutamate ligase activity"/>
    <property type="evidence" value="ECO:0007669"/>
    <property type="project" value="UniProtKB-UniRule"/>
</dbReference>
<dbReference type="GO" id="GO:0051301">
    <property type="term" value="P:cell division"/>
    <property type="evidence" value="ECO:0007669"/>
    <property type="project" value="UniProtKB-KW"/>
</dbReference>
<dbReference type="GO" id="GO:0071555">
    <property type="term" value="P:cell wall organization"/>
    <property type="evidence" value="ECO:0007669"/>
    <property type="project" value="UniProtKB-KW"/>
</dbReference>
<dbReference type="GO" id="GO:0009252">
    <property type="term" value="P:peptidoglycan biosynthetic process"/>
    <property type="evidence" value="ECO:0007669"/>
    <property type="project" value="UniProtKB-UniRule"/>
</dbReference>
<dbReference type="GO" id="GO:0008360">
    <property type="term" value="P:regulation of cell shape"/>
    <property type="evidence" value="ECO:0007669"/>
    <property type="project" value="UniProtKB-KW"/>
</dbReference>
<dbReference type="Gene3D" id="3.90.190.20">
    <property type="entry name" value="Mur ligase, C-terminal domain"/>
    <property type="match status" value="1"/>
</dbReference>
<dbReference type="Gene3D" id="3.40.1190.10">
    <property type="entry name" value="Mur-like, catalytic domain"/>
    <property type="match status" value="1"/>
</dbReference>
<dbReference type="Gene3D" id="3.40.50.720">
    <property type="entry name" value="NAD(P)-binding Rossmann-like Domain"/>
    <property type="match status" value="1"/>
</dbReference>
<dbReference type="HAMAP" id="MF_00639">
    <property type="entry name" value="MurD"/>
    <property type="match status" value="1"/>
</dbReference>
<dbReference type="InterPro" id="IPR036565">
    <property type="entry name" value="Mur-like_cat_sf"/>
</dbReference>
<dbReference type="InterPro" id="IPR004101">
    <property type="entry name" value="Mur_ligase_C"/>
</dbReference>
<dbReference type="InterPro" id="IPR036615">
    <property type="entry name" value="Mur_ligase_C_dom_sf"/>
</dbReference>
<dbReference type="InterPro" id="IPR013221">
    <property type="entry name" value="Mur_ligase_cen"/>
</dbReference>
<dbReference type="InterPro" id="IPR005762">
    <property type="entry name" value="MurD"/>
</dbReference>
<dbReference type="NCBIfam" id="TIGR01087">
    <property type="entry name" value="murD"/>
    <property type="match status" value="1"/>
</dbReference>
<dbReference type="PANTHER" id="PTHR43692">
    <property type="entry name" value="UDP-N-ACETYLMURAMOYLALANINE--D-GLUTAMATE LIGASE"/>
    <property type="match status" value="1"/>
</dbReference>
<dbReference type="PANTHER" id="PTHR43692:SF1">
    <property type="entry name" value="UDP-N-ACETYLMURAMOYLALANINE--D-GLUTAMATE LIGASE"/>
    <property type="match status" value="1"/>
</dbReference>
<dbReference type="Pfam" id="PF02875">
    <property type="entry name" value="Mur_ligase_C"/>
    <property type="match status" value="1"/>
</dbReference>
<dbReference type="Pfam" id="PF08245">
    <property type="entry name" value="Mur_ligase_M"/>
    <property type="match status" value="1"/>
</dbReference>
<dbReference type="Pfam" id="PF21799">
    <property type="entry name" value="MurD-like_N"/>
    <property type="match status" value="1"/>
</dbReference>
<dbReference type="SUPFAM" id="SSF51984">
    <property type="entry name" value="MurCD N-terminal domain"/>
    <property type="match status" value="1"/>
</dbReference>
<dbReference type="SUPFAM" id="SSF53623">
    <property type="entry name" value="MurD-like peptide ligases, catalytic domain"/>
    <property type="match status" value="1"/>
</dbReference>
<dbReference type="SUPFAM" id="SSF53244">
    <property type="entry name" value="MurD-like peptide ligases, peptide-binding domain"/>
    <property type="match status" value="1"/>
</dbReference>
<evidence type="ECO:0000255" key="1">
    <source>
        <dbReference type="HAMAP-Rule" id="MF_00639"/>
    </source>
</evidence>
<accession>A4WQD2</accession>
<sequence length="465" mass="49808">MIPVRGLEGRKVAVLGLGRSGLATARALQAGGAEPLLWDDSPEARANAEGQGFAVTDLTRERAFEDVALLVTSPGIPHLYPAPNPVIARAMAAGVPVDNDIGLFFRSFATRDWDAFDQMPRVVCVTGSNGKSTTTALIHHILAESGRPTQMAGNIGRGVLDLDPARDGEVVVLELSSYQTDLARALTPDVAVFTNLSPDHLDRHGGMGGYFAAKRRLFAEGGPDRAVIGVDEPEGLYLAGQLSVAPEDDRVIRISAGQKLERFGWAVFARKGFLAEWRKGRQMASIDLRAMPGLPGAHNHQNACAAYAACRTLGLAPRQIEEALGSFKGLPHRSQLVGERNGVRFVNDSKATNVDSAAKALQAFPKIRWIAGGLGKDGGIAALRPHLDAVVKAYLIGHSARDFALQMGATDHEICETMDRAVVRAAEEAQPGEVVLLAPAAASFDQYPNFEKRGEDFMERVKALL</sequence>
<gene>
    <name evidence="1" type="primary">murD</name>
    <name type="ordered locus">Rsph17025_0690</name>
</gene>
<name>MURD_CERS5</name>
<keyword id="KW-0067">ATP-binding</keyword>
<keyword id="KW-0131">Cell cycle</keyword>
<keyword id="KW-0132">Cell division</keyword>
<keyword id="KW-0133">Cell shape</keyword>
<keyword id="KW-0961">Cell wall biogenesis/degradation</keyword>
<keyword id="KW-0963">Cytoplasm</keyword>
<keyword id="KW-0436">Ligase</keyword>
<keyword id="KW-0547">Nucleotide-binding</keyword>
<keyword id="KW-0573">Peptidoglycan synthesis</keyword>
<comment type="function">
    <text evidence="1">Cell wall formation. Catalyzes the addition of glutamate to the nucleotide precursor UDP-N-acetylmuramoyl-L-alanine (UMA).</text>
</comment>
<comment type="catalytic activity">
    <reaction evidence="1">
        <text>UDP-N-acetyl-alpha-D-muramoyl-L-alanine + D-glutamate + ATP = UDP-N-acetyl-alpha-D-muramoyl-L-alanyl-D-glutamate + ADP + phosphate + H(+)</text>
        <dbReference type="Rhea" id="RHEA:16429"/>
        <dbReference type="ChEBI" id="CHEBI:15378"/>
        <dbReference type="ChEBI" id="CHEBI:29986"/>
        <dbReference type="ChEBI" id="CHEBI:30616"/>
        <dbReference type="ChEBI" id="CHEBI:43474"/>
        <dbReference type="ChEBI" id="CHEBI:83898"/>
        <dbReference type="ChEBI" id="CHEBI:83900"/>
        <dbReference type="ChEBI" id="CHEBI:456216"/>
        <dbReference type="EC" id="6.3.2.9"/>
    </reaction>
</comment>
<comment type="pathway">
    <text evidence="1">Cell wall biogenesis; peptidoglycan biosynthesis.</text>
</comment>
<comment type="subcellular location">
    <subcellularLocation>
        <location evidence="1">Cytoplasm</location>
    </subcellularLocation>
</comment>
<comment type="similarity">
    <text evidence="1">Belongs to the MurCDEF family.</text>
</comment>
<feature type="chain" id="PRO_1000056886" description="UDP-N-acetylmuramoylalanine--D-glutamate ligase">
    <location>
        <begin position="1"/>
        <end position="465"/>
    </location>
</feature>
<feature type="binding site" evidence="1">
    <location>
        <begin position="127"/>
        <end position="133"/>
    </location>
    <ligand>
        <name>ATP</name>
        <dbReference type="ChEBI" id="CHEBI:30616"/>
    </ligand>
</feature>
<organism>
    <name type="scientific">Cereibacter sphaeroides (strain ATCC 17025 / ATH 2.4.3)</name>
    <name type="common">Rhodobacter sphaeroides</name>
    <dbReference type="NCBI Taxonomy" id="349102"/>
    <lineage>
        <taxon>Bacteria</taxon>
        <taxon>Pseudomonadati</taxon>
        <taxon>Pseudomonadota</taxon>
        <taxon>Alphaproteobacteria</taxon>
        <taxon>Rhodobacterales</taxon>
        <taxon>Paracoccaceae</taxon>
        <taxon>Cereibacter</taxon>
    </lineage>
</organism>
<protein>
    <recommendedName>
        <fullName evidence="1">UDP-N-acetylmuramoylalanine--D-glutamate ligase</fullName>
        <ecNumber evidence="1">6.3.2.9</ecNumber>
    </recommendedName>
    <alternativeName>
        <fullName evidence="1">D-glutamic acid-adding enzyme</fullName>
    </alternativeName>
    <alternativeName>
        <fullName evidence="1">UDP-N-acetylmuramoyl-L-alanyl-D-glutamate synthetase</fullName>
    </alternativeName>
</protein>
<proteinExistence type="inferred from homology"/>
<reference key="1">
    <citation type="submission" date="2007-04" db="EMBL/GenBank/DDBJ databases">
        <title>Complete sequence of chromosome of Rhodobacter sphaeroides ATCC 17025.</title>
        <authorList>
            <consortium name="US DOE Joint Genome Institute"/>
            <person name="Copeland A."/>
            <person name="Lucas S."/>
            <person name="Lapidus A."/>
            <person name="Barry K."/>
            <person name="Detter J.C."/>
            <person name="Glavina del Rio T."/>
            <person name="Hammon N."/>
            <person name="Israni S."/>
            <person name="Dalin E."/>
            <person name="Tice H."/>
            <person name="Pitluck S."/>
            <person name="Chertkov O."/>
            <person name="Brettin T."/>
            <person name="Bruce D."/>
            <person name="Han C."/>
            <person name="Schmutz J."/>
            <person name="Larimer F."/>
            <person name="Land M."/>
            <person name="Hauser L."/>
            <person name="Kyrpides N."/>
            <person name="Kim E."/>
            <person name="Richardson P."/>
            <person name="Mackenzie C."/>
            <person name="Choudhary M."/>
            <person name="Donohue T.J."/>
            <person name="Kaplan S."/>
        </authorList>
    </citation>
    <scope>NUCLEOTIDE SEQUENCE [LARGE SCALE GENOMIC DNA]</scope>
    <source>
        <strain>ATCC 17025 / ATH 2.4.3</strain>
    </source>
</reference>